<dbReference type="EC" id="3.4.21.42" evidence="1"/>
<dbReference type="EMBL" id="AF459019">
    <property type="protein sequence ID" value="AAO15558.1"/>
    <property type="molecule type" value="mRNA"/>
</dbReference>
<dbReference type="EMBL" id="AF459017">
    <property type="protein sequence ID" value="AAO15556.1"/>
    <property type="molecule type" value="Genomic_DNA"/>
</dbReference>
<dbReference type="EMBL" id="AF459015">
    <property type="protein sequence ID" value="AAO15556.1"/>
    <property type="status" value="JOINED"/>
    <property type="molecule type" value="Genomic_DNA"/>
</dbReference>
<dbReference type="EMBL" id="AF459016">
    <property type="protein sequence ID" value="AAO15556.1"/>
    <property type="status" value="JOINED"/>
    <property type="molecule type" value="Genomic_DNA"/>
</dbReference>
<dbReference type="EMBL" id="AK087522">
    <property type="protein sequence ID" value="BAC39910.1"/>
    <property type="status" value="ALT_INIT"/>
    <property type="molecule type" value="mRNA"/>
</dbReference>
<dbReference type="EMBL" id="BC022123">
    <property type="protein sequence ID" value="AAH22123.1"/>
    <property type="molecule type" value="mRNA"/>
</dbReference>
<dbReference type="EMBL" id="BC018319">
    <property type="protein sequence ID" value="AAH18319.1"/>
    <property type="molecule type" value="mRNA"/>
</dbReference>
<dbReference type="RefSeq" id="NP_001091086.1">
    <property type="nucleotide sequence ID" value="NM_001097617.1"/>
</dbReference>
<dbReference type="RefSeq" id="NP_659187.2">
    <property type="nucleotide sequence ID" value="NM_144938.2"/>
</dbReference>
<dbReference type="SMR" id="Q8CG14"/>
<dbReference type="ComplexPortal" id="CPX-4984">
    <property type="entry name" value="Complement C1 complex, C1ra-C1sa variant"/>
</dbReference>
<dbReference type="FunCoup" id="Q8CG14">
    <property type="interactions" value="156"/>
</dbReference>
<dbReference type="STRING" id="10090.ENSMUSP00000125531"/>
<dbReference type="MEROPS" id="S01.360"/>
<dbReference type="GlyCosmos" id="Q8CG14">
    <property type="glycosylation" value="2 sites, No reported glycans"/>
</dbReference>
<dbReference type="GlyGen" id="Q8CG14">
    <property type="glycosylation" value="3 sites, 1 O-linked glycan (1 site)"/>
</dbReference>
<dbReference type="iPTMnet" id="Q8CG14"/>
<dbReference type="PhosphoSitePlus" id="Q8CG14"/>
<dbReference type="CPTAC" id="non-CPTAC-5597"/>
<dbReference type="PaxDb" id="10090-ENSMUSP00000125531"/>
<dbReference type="PeptideAtlas" id="Q8CG14"/>
<dbReference type="ProteomicsDB" id="279066"/>
<dbReference type="Pumba" id="Q8CG14"/>
<dbReference type="DNASU" id="50908"/>
<dbReference type="GeneID" id="50908"/>
<dbReference type="KEGG" id="mmu:50908"/>
<dbReference type="AGR" id="MGI:1355312"/>
<dbReference type="CTD" id="50908"/>
<dbReference type="MGI" id="MGI:1355312">
    <property type="gene designation" value="C1s1"/>
</dbReference>
<dbReference type="eggNOG" id="KOG3627">
    <property type="taxonomic scope" value="Eukaryota"/>
</dbReference>
<dbReference type="InParanoid" id="Q8CG14"/>
<dbReference type="OrthoDB" id="9985152at2759"/>
<dbReference type="PhylomeDB" id="Q8CG14"/>
<dbReference type="BioGRID-ORCS" id="50908">
    <property type="hits" value="1 hit in 77 CRISPR screens"/>
</dbReference>
<dbReference type="ChiTaRS" id="C1s1">
    <property type="organism name" value="mouse"/>
</dbReference>
<dbReference type="PRO" id="PR:Q8CG14"/>
<dbReference type="Proteomes" id="UP000000589">
    <property type="component" value="Unplaced"/>
</dbReference>
<dbReference type="RNAct" id="Q8CG14">
    <property type="molecule type" value="protein"/>
</dbReference>
<dbReference type="GO" id="GO:0005576">
    <property type="term" value="C:extracellular region"/>
    <property type="evidence" value="ECO:0007669"/>
    <property type="project" value="InterPro"/>
</dbReference>
<dbReference type="GO" id="GO:0005509">
    <property type="term" value="F:calcium ion binding"/>
    <property type="evidence" value="ECO:0007669"/>
    <property type="project" value="InterPro"/>
</dbReference>
<dbReference type="GO" id="GO:0004252">
    <property type="term" value="F:serine-type endopeptidase activity"/>
    <property type="evidence" value="ECO:0007669"/>
    <property type="project" value="UniProtKB-EC"/>
</dbReference>
<dbReference type="GO" id="GO:0006958">
    <property type="term" value="P:complement activation, classical pathway"/>
    <property type="evidence" value="ECO:0007669"/>
    <property type="project" value="UniProtKB-KW"/>
</dbReference>
<dbReference type="GO" id="GO:0045087">
    <property type="term" value="P:innate immune response"/>
    <property type="evidence" value="ECO:0007669"/>
    <property type="project" value="UniProtKB-KW"/>
</dbReference>
<dbReference type="GO" id="GO:0006508">
    <property type="term" value="P:proteolysis"/>
    <property type="evidence" value="ECO:0007669"/>
    <property type="project" value="UniProtKB-KW"/>
</dbReference>
<dbReference type="CDD" id="cd00033">
    <property type="entry name" value="CCP"/>
    <property type="match status" value="2"/>
</dbReference>
<dbReference type="CDD" id="cd00041">
    <property type="entry name" value="CUB"/>
    <property type="match status" value="2"/>
</dbReference>
<dbReference type="CDD" id="cd00054">
    <property type="entry name" value="EGF_CA"/>
    <property type="match status" value="1"/>
</dbReference>
<dbReference type="CDD" id="cd00190">
    <property type="entry name" value="Tryp_SPc"/>
    <property type="match status" value="1"/>
</dbReference>
<dbReference type="FunFam" id="2.10.70.10:FF:000049">
    <property type="entry name" value="Complement C1s subcomponent"/>
    <property type="match status" value="1"/>
</dbReference>
<dbReference type="FunFam" id="2.40.10.10:FF:000067">
    <property type="entry name" value="Complement C1s subcomponent"/>
    <property type="match status" value="1"/>
</dbReference>
<dbReference type="FunFam" id="2.60.120.290:FF:000034">
    <property type="entry name" value="complement C1s subcomponent"/>
    <property type="match status" value="1"/>
</dbReference>
<dbReference type="FunFam" id="2.10.25.10:FF:000059">
    <property type="entry name" value="Mannan-binding lectin serine protease 1"/>
    <property type="match status" value="1"/>
</dbReference>
<dbReference type="FunFam" id="2.10.70.10:FF:000016">
    <property type="entry name" value="Mannan-binding lectin serine protease 1"/>
    <property type="match status" value="1"/>
</dbReference>
<dbReference type="FunFam" id="2.60.120.290:FF:000006">
    <property type="entry name" value="Mannan-binding lectin serine protease 1"/>
    <property type="match status" value="1"/>
</dbReference>
<dbReference type="Gene3D" id="2.10.70.10">
    <property type="entry name" value="Complement Module, domain 1"/>
    <property type="match status" value="2"/>
</dbReference>
<dbReference type="Gene3D" id="2.10.25.10">
    <property type="entry name" value="Laminin"/>
    <property type="match status" value="1"/>
</dbReference>
<dbReference type="Gene3D" id="2.60.120.290">
    <property type="entry name" value="Spermadhesin, CUB domain"/>
    <property type="match status" value="2"/>
</dbReference>
<dbReference type="Gene3D" id="2.40.10.10">
    <property type="entry name" value="Trypsin-like serine proteases"/>
    <property type="match status" value="2"/>
</dbReference>
<dbReference type="InterPro" id="IPR000859">
    <property type="entry name" value="CUB_dom"/>
</dbReference>
<dbReference type="InterPro" id="IPR001881">
    <property type="entry name" value="EGF-like_Ca-bd_dom"/>
</dbReference>
<dbReference type="InterPro" id="IPR000152">
    <property type="entry name" value="EGF-type_Asp/Asn_hydroxyl_site"/>
</dbReference>
<dbReference type="InterPro" id="IPR018097">
    <property type="entry name" value="EGF_Ca-bd_CS"/>
</dbReference>
<dbReference type="InterPro" id="IPR024175">
    <property type="entry name" value="Pept_S1A_C1r/C1S/mannan-bd"/>
</dbReference>
<dbReference type="InterPro" id="IPR009003">
    <property type="entry name" value="Peptidase_S1_PA"/>
</dbReference>
<dbReference type="InterPro" id="IPR043504">
    <property type="entry name" value="Peptidase_S1_PA_chymotrypsin"/>
</dbReference>
<dbReference type="InterPro" id="IPR001314">
    <property type="entry name" value="Peptidase_S1A"/>
</dbReference>
<dbReference type="InterPro" id="IPR035914">
    <property type="entry name" value="Sperma_CUB_dom_sf"/>
</dbReference>
<dbReference type="InterPro" id="IPR035976">
    <property type="entry name" value="Sushi/SCR/CCP_sf"/>
</dbReference>
<dbReference type="InterPro" id="IPR000436">
    <property type="entry name" value="Sushi_SCR_CCP_dom"/>
</dbReference>
<dbReference type="InterPro" id="IPR001254">
    <property type="entry name" value="Trypsin_dom"/>
</dbReference>
<dbReference type="InterPro" id="IPR033116">
    <property type="entry name" value="TRYPSIN_SER"/>
</dbReference>
<dbReference type="PANTHER" id="PTHR24255:SF18">
    <property type="entry name" value="COMPLEMENT C1S SUBCOMPONENT"/>
    <property type="match status" value="1"/>
</dbReference>
<dbReference type="PANTHER" id="PTHR24255">
    <property type="entry name" value="COMPLEMENT COMPONENT 1, S SUBCOMPONENT-RELATED"/>
    <property type="match status" value="1"/>
</dbReference>
<dbReference type="Pfam" id="PF00431">
    <property type="entry name" value="CUB"/>
    <property type="match status" value="2"/>
</dbReference>
<dbReference type="Pfam" id="PF14670">
    <property type="entry name" value="FXa_inhibition"/>
    <property type="match status" value="1"/>
</dbReference>
<dbReference type="Pfam" id="PF00084">
    <property type="entry name" value="Sushi"/>
    <property type="match status" value="2"/>
</dbReference>
<dbReference type="Pfam" id="PF00089">
    <property type="entry name" value="Trypsin"/>
    <property type="match status" value="1"/>
</dbReference>
<dbReference type="PIRSF" id="PIRSF001155">
    <property type="entry name" value="C1r_C1s_MASP"/>
    <property type="match status" value="1"/>
</dbReference>
<dbReference type="PRINTS" id="PR00722">
    <property type="entry name" value="CHYMOTRYPSIN"/>
</dbReference>
<dbReference type="SMART" id="SM00032">
    <property type="entry name" value="CCP"/>
    <property type="match status" value="2"/>
</dbReference>
<dbReference type="SMART" id="SM00042">
    <property type="entry name" value="CUB"/>
    <property type="match status" value="2"/>
</dbReference>
<dbReference type="SMART" id="SM00179">
    <property type="entry name" value="EGF_CA"/>
    <property type="match status" value="1"/>
</dbReference>
<dbReference type="SMART" id="SM00020">
    <property type="entry name" value="Tryp_SPc"/>
    <property type="match status" value="1"/>
</dbReference>
<dbReference type="SUPFAM" id="SSF57535">
    <property type="entry name" value="Complement control module/SCR domain"/>
    <property type="match status" value="2"/>
</dbReference>
<dbReference type="SUPFAM" id="SSF57196">
    <property type="entry name" value="EGF/Laminin"/>
    <property type="match status" value="1"/>
</dbReference>
<dbReference type="SUPFAM" id="SSF49854">
    <property type="entry name" value="Spermadhesin, CUB domain"/>
    <property type="match status" value="2"/>
</dbReference>
<dbReference type="SUPFAM" id="SSF50494">
    <property type="entry name" value="Trypsin-like serine proteases"/>
    <property type="match status" value="1"/>
</dbReference>
<dbReference type="PROSITE" id="PS00010">
    <property type="entry name" value="ASX_HYDROXYL"/>
    <property type="match status" value="1"/>
</dbReference>
<dbReference type="PROSITE" id="PS01180">
    <property type="entry name" value="CUB"/>
    <property type="match status" value="2"/>
</dbReference>
<dbReference type="PROSITE" id="PS01187">
    <property type="entry name" value="EGF_CA"/>
    <property type="match status" value="1"/>
</dbReference>
<dbReference type="PROSITE" id="PS50923">
    <property type="entry name" value="SUSHI"/>
    <property type="match status" value="2"/>
</dbReference>
<dbReference type="PROSITE" id="PS50240">
    <property type="entry name" value="TRYPSIN_DOM"/>
    <property type="match status" value="1"/>
</dbReference>
<dbReference type="PROSITE" id="PS00135">
    <property type="entry name" value="TRYPSIN_SER"/>
    <property type="match status" value="1"/>
</dbReference>
<sequence length="688" mass="76858">MWCLVLFSLLASFSAEPTMHGEILSPNYPQAYPNDVVKSWDIEVPEGFGIHLYFTHVDIEPSESCAYDSVQIISGGIEEGRLCGQKTSKSPNSPIIEEFQFPYNKLQVVFTSDFSNEERFTGFAAYYTAIDINECTDFTDVPCSHFCNNFIGGYFCSCPPEYFLHDDMRNCGVNCSGDVFTALIGEISSPNYPNPYPENSRCEYQIQLQEGFQVVVTMQREDFDVEPADSEGNCPDSLTFASKNQQFGPYCGNGFPGPLTIRTQSNTLGIVFQTDLMGQKKGWKLRYHGDPISCAKKITANSTWEPDKAKYVFKDVVKITCVDGFEVVEGHVSSTSYYSTCQSDGQWSNSGLKCQPVYCGIPDPIANGKVEEPENSVFGTVVHYTCEEPYYYMEHEEGGEYRCAANGRWVNDQLGIELPRCIPACGVPTEPFQVHQRIFGGQPAKIENFPWQVFFNHPRASGALINEYWVLTAAHVLEKISDPLMYVGTMSVRTTLLENAQRLYSKRVFIHPSWKKEDDPNTRTNFDNDIALVQLKDPVKMGPKVSPICLPGTSSEYNVSPGDMGLISGWGSTEKKVFVINLRGAKVPVTSLETCKQVKEENPTVRPEDYVFTDNMICAGEKGVDSCHGDSGGAFAFQVPNVTVPKFYVAGLVSWGKRCGTYGVYTKVKNYVDWILKTMQENSGPRKD</sequence>
<keyword id="KW-0106">Calcium</keyword>
<keyword id="KW-0180">Complement pathway</keyword>
<keyword id="KW-1015">Disulfide bond</keyword>
<keyword id="KW-0245">EGF-like domain</keyword>
<keyword id="KW-0325">Glycoprotein</keyword>
<keyword id="KW-0378">Hydrolase</keyword>
<keyword id="KW-0379">Hydroxylation</keyword>
<keyword id="KW-0391">Immunity</keyword>
<keyword id="KW-0399">Innate immunity</keyword>
<keyword id="KW-0479">Metal-binding</keyword>
<keyword id="KW-0645">Protease</keyword>
<keyword id="KW-1185">Reference proteome</keyword>
<keyword id="KW-0677">Repeat</keyword>
<keyword id="KW-0964">Secreted</keyword>
<keyword id="KW-0720">Serine protease</keyword>
<keyword id="KW-0732">Signal</keyword>
<keyword id="KW-0768">Sushi</keyword>
<feature type="signal peptide" evidence="1">
    <location>
        <begin position="1"/>
        <end position="15"/>
    </location>
</feature>
<feature type="chain" id="PRO_0000042193" description="Complement C1s-1 subcomponent">
    <location>
        <begin position="16"/>
        <end position="688"/>
    </location>
</feature>
<feature type="chain" id="PRO_0000042194" description="Complement C1s-A subcomponent heavy chain" evidence="1">
    <location>
        <begin position="16"/>
        <end position="437"/>
    </location>
</feature>
<feature type="chain" id="PRO_0000042195" description="Complement C1s-A subcomponent light chain" evidence="1">
    <location>
        <begin position="438"/>
        <end position="688"/>
    </location>
</feature>
<feature type="domain" description="CUB 1" evidence="3">
    <location>
        <begin position="16"/>
        <end position="130"/>
    </location>
</feature>
<feature type="domain" description="EGF-like; calcium-binding" evidence="2">
    <location>
        <begin position="131"/>
        <end position="172"/>
    </location>
</feature>
<feature type="domain" description="CUB 2" evidence="3">
    <location>
        <begin position="175"/>
        <end position="290"/>
    </location>
</feature>
<feature type="domain" description="Sushi 1" evidence="5">
    <location>
        <begin position="292"/>
        <end position="356"/>
    </location>
</feature>
<feature type="domain" description="Sushi 2" evidence="5">
    <location>
        <begin position="357"/>
        <end position="423"/>
    </location>
</feature>
<feature type="domain" description="Peptidase S1" evidence="4">
    <location>
        <begin position="438"/>
        <end position="680"/>
    </location>
</feature>
<feature type="active site" description="Charge relay system" evidence="1">
    <location>
        <position position="475"/>
    </location>
</feature>
<feature type="active site" description="Charge relay system" evidence="1">
    <location>
        <position position="529"/>
    </location>
</feature>
<feature type="active site" description="Charge relay system" evidence="1">
    <location>
        <position position="631"/>
    </location>
</feature>
<feature type="binding site" evidence="1">
    <location>
        <position position="60"/>
    </location>
    <ligand>
        <name>Ca(2+)</name>
        <dbReference type="ChEBI" id="CHEBI:29108"/>
        <label>1</label>
    </ligand>
</feature>
<feature type="binding site" evidence="1">
    <location>
        <position position="68"/>
    </location>
    <ligand>
        <name>Ca(2+)</name>
        <dbReference type="ChEBI" id="CHEBI:29108"/>
        <label>1</label>
    </ligand>
</feature>
<feature type="binding site" evidence="1">
    <location>
        <position position="113"/>
    </location>
    <ligand>
        <name>Ca(2+)</name>
        <dbReference type="ChEBI" id="CHEBI:29108"/>
        <label>1</label>
    </ligand>
</feature>
<feature type="binding site" evidence="1">
    <location>
        <position position="131"/>
    </location>
    <ligand>
        <name>Ca(2+)</name>
        <dbReference type="ChEBI" id="CHEBI:29108"/>
        <label>2</label>
    </ligand>
</feature>
<feature type="binding site" evidence="1">
    <location>
        <position position="132"/>
    </location>
    <ligand>
        <name>Ca(2+)</name>
        <dbReference type="ChEBI" id="CHEBI:29108"/>
        <label>2</label>
    </ligand>
</feature>
<feature type="binding site" evidence="1">
    <location>
        <position position="134"/>
    </location>
    <ligand>
        <name>Ca(2+)</name>
        <dbReference type="ChEBI" id="CHEBI:29108"/>
        <label>2</label>
    </ligand>
</feature>
<feature type="binding site" evidence="1">
    <location>
        <position position="149"/>
    </location>
    <ligand>
        <name>Ca(2+)</name>
        <dbReference type="ChEBI" id="CHEBI:29108"/>
        <label>2</label>
    </ligand>
</feature>
<feature type="binding site" evidence="1">
    <location>
        <position position="150"/>
    </location>
    <ligand>
        <name>Ca(2+)</name>
        <dbReference type="ChEBI" id="CHEBI:29108"/>
        <label>2</label>
    </ligand>
</feature>
<feature type="binding site" evidence="1">
    <location>
        <position position="153"/>
    </location>
    <ligand>
        <name>Ca(2+)</name>
        <dbReference type="ChEBI" id="CHEBI:29108"/>
        <label>2</label>
    </ligand>
</feature>
<feature type="binding site" evidence="1">
    <location>
        <position position="226"/>
    </location>
    <ligand>
        <name>Ca(2+)</name>
        <dbReference type="ChEBI" id="CHEBI:29108"/>
        <label>3</label>
    </ligand>
</feature>
<feature type="binding site" evidence="1">
    <location>
        <position position="236"/>
    </location>
    <ligand>
        <name>Ca(2+)</name>
        <dbReference type="ChEBI" id="CHEBI:29108"/>
        <label>3</label>
    </ligand>
</feature>
<feature type="binding site" evidence="1">
    <location>
        <position position="275"/>
    </location>
    <ligand>
        <name>Ca(2+)</name>
        <dbReference type="ChEBI" id="CHEBI:29108"/>
        <label>3</label>
    </ligand>
</feature>
<feature type="binding site" evidence="1">
    <location>
        <position position="278"/>
    </location>
    <ligand>
        <name>Ca(2+)</name>
        <dbReference type="ChEBI" id="CHEBI:29108"/>
        <label>3</label>
    </ligand>
</feature>
<feature type="binding site" evidence="1">
    <location>
        <position position="279"/>
    </location>
    <ligand>
        <name>Ca(2+)</name>
        <dbReference type="ChEBI" id="CHEBI:29108"/>
        <label>3</label>
    </ligand>
</feature>
<feature type="site" description="Cleavage; by C1R" evidence="1">
    <location>
        <begin position="437"/>
        <end position="438"/>
    </location>
</feature>
<feature type="modified residue" description="(3R)-3-hydroxyasparagine" evidence="1">
    <location>
        <position position="149"/>
    </location>
</feature>
<feature type="glycosylation site" description="N-linked (GlcNAc...) asparagine" evidence="2">
    <location>
        <position position="174"/>
    </location>
</feature>
<feature type="glycosylation site" description="N-linked (GlcNAc...) asparagine" evidence="2">
    <location>
        <position position="641"/>
    </location>
</feature>
<feature type="disulfide bond" evidence="1">
    <location>
        <begin position="65"/>
        <end position="83"/>
    </location>
</feature>
<feature type="disulfide bond" evidence="1">
    <location>
        <begin position="135"/>
        <end position="147"/>
    </location>
</feature>
<feature type="disulfide bond" evidence="1">
    <location>
        <begin position="143"/>
        <end position="156"/>
    </location>
</feature>
<feature type="disulfide bond" evidence="1">
    <location>
        <begin position="158"/>
        <end position="171"/>
    </location>
</feature>
<feature type="disulfide bond" evidence="1">
    <location>
        <begin position="175"/>
        <end position="202"/>
    </location>
</feature>
<feature type="disulfide bond" evidence="1">
    <location>
        <begin position="234"/>
        <end position="251"/>
    </location>
</feature>
<feature type="disulfide bond" evidence="1">
    <location>
        <begin position="294"/>
        <end position="341"/>
    </location>
</feature>
<feature type="disulfide bond" evidence="1">
    <location>
        <begin position="321"/>
        <end position="354"/>
    </location>
</feature>
<feature type="disulfide bond" evidence="1">
    <location>
        <begin position="359"/>
        <end position="403"/>
    </location>
</feature>
<feature type="disulfide bond" evidence="1">
    <location>
        <begin position="386"/>
        <end position="421"/>
    </location>
</feature>
<feature type="disulfide bond" description="Interchain (between heavy and light chains)" evidence="3 4 5">
    <location>
        <begin position="425"/>
        <end position="549"/>
    </location>
</feature>
<feature type="disulfide bond" evidence="1">
    <location>
        <begin position="595"/>
        <end position="618"/>
    </location>
</feature>
<feature type="disulfide bond" evidence="1">
    <location>
        <begin position="627"/>
        <end position="659"/>
    </location>
</feature>
<feature type="sequence conflict" description="In Ref. 1; AAO15556 and 2; BAC39910." evidence="8" ref="1 2">
    <original>G</original>
    <variation>D</variation>
    <location>
        <position position="76"/>
    </location>
</feature>
<feature type="sequence conflict" description="In Ref. 1; AAO15556 and 2; BAC39910." evidence="8" ref="1 2">
    <original>K</original>
    <variation>R</variation>
    <location>
        <position position="86"/>
    </location>
</feature>
<feature type="sequence conflict" description="In Ref. 1; AAO15556 and 2; BAC39910." evidence="8" ref="1 2">
    <original>E</original>
    <variation>Q</variation>
    <location>
        <position position="305"/>
    </location>
</feature>
<feature type="sequence conflict" description="In Ref. 2; BAC39910." evidence="8" ref="2">
    <original>F</original>
    <variation>L</variation>
    <location>
        <position position="378"/>
    </location>
</feature>
<accession>Q8CG14</accession>
<accession>Q8BJC4</accession>
<accession>Q8CH28</accession>
<accession>Q8VBY4</accession>
<evidence type="ECO:0000250" key="1">
    <source>
        <dbReference type="UniProtKB" id="P09871"/>
    </source>
</evidence>
<evidence type="ECO:0000255" key="2"/>
<evidence type="ECO:0000255" key="3">
    <source>
        <dbReference type="PROSITE-ProRule" id="PRU00059"/>
    </source>
</evidence>
<evidence type="ECO:0000255" key="4">
    <source>
        <dbReference type="PROSITE-ProRule" id="PRU00274"/>
    </source>
</evidence>
<evidence type="ECO:0000255" key="5">
    <source>
        <dbReference type="PROSITE-ProRule" id="PRU00302"/>
    </source>
</evidence>
<evidence type="ECO:0000269" key="6">
    <source>
    </source>
</evidence>
<evidence type="ECO:0000303" key="7">
    <source>
    </source>
</evidence>
<evidence type="ECO:0000305" key="8"/>
<evidence type="ECO:0000312" key="9">
    <source>
        <dbReference type="MGI" id="MGI:1355312"/>
    </source>
</evidence>
<organism>
    <name type="scientific">Mus musculus</name>
    <name type="common">Mouse</name>
    <dbReference type="NCBI Taxonomy" id="10090"/>
    <lineage>
        <taxon>Eukaryota</taxon>
        <taxon>Metazoa</taxon>
        <taxon>Chordata</taxon>
        <taxon>Craniata</taxon>
        <taxon>Vertebrata</taxon>
        <taxon>Euteleostomi</taxon>
        <taxon>Mammalia</taxon>
        <taxon>Eutheria</taxon>
        <taxon>Euarchontoglires</taxon>
        <taxon>Glires</taxon>
        <taxon>Rodentia</taxon>
        <taxon>Myomorpha</taxon>
        <taxon>Muroidea</taxon>
        <taxon>Muridae</taxon>
        <taxon>Murinae</taxon>
        <taxon>Mus</taxon>
        <taxon>Mus</taxon>
    </lineage>
</organism>
<reference key="1">
    <citation type="journal article" date="2003" name="Biochem. J.">
        <title>Complement C1r and C1s genes are duplicated in the mouse: differential expression generates alternative isomorphs in the liver and in the male reproductive system.</title>
        <authorList>
            <person name="Garnier G."/>
            <person name="Circolo A."/>
            <person name="Xu Y."/>
            <person name="Volanakis J.E."/>
        </authorList>
    </citation>
    <scope>NUCLEOTIDE SEQUENCE [GENOMIC DNA / MRNA]</scope>
    <scope>TISSUE SPECIFICITY</scope>
    <source>
        <strain>129/SvJ</strain>
        <strain>BALB/cJ</strain>
    </source>
</reference>
<reference key="2">
    <citation type="journal article" date="2005" name="Science">
        <title>The transcriptional landscape of the mammalian genome.</title>
        <authorList>
            <person name="Carninci P."/>
            <person name="Kasukawa T."/>
            <person name="Katayama S."/>
            <person name="Gough J."/>
            <person name="Frith M.C."/>
            <person name="Maeda N."/>
            <person name="Oyama R."/>
            <person name="Ravasi T."/>
            <person name="Lenhard B."/>
            <person name="Wells C."/>
            <person name="Kodzius R."/>
            <person name="Shimokawa K."/>
            <person name="Bajic V.B."/>
            <person name="Brenner S.E."/>
            <person name="Batalov S."/>
            <person name="Forrest A.R."/>
            <person name="Zavolan M."/>
            <person name="Davis M.J."/>
            <person name="Wilming L.G."/>
            <person name="Aidinis V."/>
            <person name="Allen J.E."/>
            <person name="Ambesi-Impiombato A."/>
            <person name="Apweiler R."/>
            <person name="Aturaliya R.N."/>
            <person name="Bailey T.L."/>
            <person name="Bansal M."/>
            <person name="Baxter L."/>
            <person name="Beisel K.W."/>
            <person name="Bersano T."/>
            <person name="Bono H."/>
            <person name="Chalk A.M."/>
            <person name="Chiu K.P."/>
            <person name="Choudhary V."/>
            <person name="Christoffels A."/>
            <person name="Clutterbuck D.R."/>
            <person name="Crowe M.L."/>
            <person name="Dalla E."/>
            <person name="Dalrymple B.P."/>
            <person name="de Bono B."/>
            <person name="Della Gatta G."/>
            <person name="di Bernardo D."/>
            <person name="Down T."/>
            <person name="Engstrom P."/>
            <person name="Fagiolini M."/>
            <person name="Faulkner G."/>
            <person name="Fletcher C.F."/>
            <person name="Fukushima T."/>
            <person name="Furuno M."/>
            <person name="Futaki S."/>
            <person name="Gariboldi M."/>
            <person name="Georgii-Hemming P."/>
            <person name="Gingeras T.R."/>
            <person name="Gojobori T."/>
            <person name="Green R.E."/>
            <person name="Gustincich S."/>
            <person name="Harbers M."/>
            <person name="Hayashi Y."/>
            <person name="Hensch T.K."/>
            <person name="Hirokawa N."/>
            <person name="Hill D."/>
            <person name="Huminiecki L."/>
            <person name="Iacono M."/>
            <person name="Ikeo K."/>
            <person name="Iwama A."/>
            <person name="Ishikawa T."/>
            <person name="Jakt M."/>
            <person name="Kanapin A."/>
            <person name="Katoh M."/>
            <person name="Kawasawa Y."/>
            <person name="Kelso J."/>
            <person name="Kitamura H."/>
            <person name="Kitano H."/>
            <person name="Kollias G."/>
            <person name="Krishnan S.P."/>
            <person name="Kruger A."/>
            <person name="Kummerfeld S.K."/>
            <person name="Kurochkin I.V."/>
            <person name="Lareau L.F."/>
            <person name="Lazarevic D."/>
            <person name="Lipovich L."/>
            <person name="Liu J."/>
            <person name="Liuni S."/>
            <person name="McWilliam S."/>
            <person name="Madan Babu M."/>
            <person name="Madera M."/>
            <person name="Marchionni L."/>
            <person name="Matsuda H."/>
            <person name="Matsuzawa S."/>
            <person name="Miki H."/>
            <person name="Mignone F."/>
            <person name="Miyake S."/>
            <person name="Morris K."/>
            <person name="Mottagui-Tabar S."/>
            <person name="Mulder N."/>
            <person name="Nakano N."/>
            <person name="Nakauchi H."/>
            <person name="Ng P."/>
            <person name="Nilsson R."/>
            <person name="Nishiguchi S."/>
            <person name="Nishikawa S."/>
            <person name="Nori F."/>
            <person name="Ohara O."/>
            <person name="Okazaki Y."/>
            <person name="Orlando V."/>
            <person name="Pang K.C."/>
            <person name="Pavan W.J."/>
            <person name="Pavesi G."/>
            <person name="Pesole G."/>
            <person name="Petrovsky N."/>
            <person name="Piazza S."/>
            <person name="Reed J."/>
            <person name="Reid J.F."/>
            <person name="Ring B.Z."/>
            <person name="Ringwald M."/>
            <person name="Rost B."/>
            <person name="Ruan Y."/>
            <person name="Salzberg S.L."/>
            <person name="Sandelin A."/>
            <person name="Schneider C."/>
            <person name="Schoenbach C."/>
            <person name="Sekiguchi K."/>
            <person name="Semple C.A."/>
            <person name="Seno S."/>
            <person name="Sessa L."/>
            <person name="Sheng Y."/>
            <person name="Shibata Y."/>
            <person name="Shimada H."/>
            <person name="Shimada K."/>
            <person name="Silva D."/>
            <person name="Sinclair B."/>
            <person name="Sperling S."/>
            <person name="Stupka E."/>
            <person name="Sugiura K."/>
            <person name="Sultana R."/>
            <person name="Takenaka Y."/>
            <person name="Taki K."/>
            <person name="Tammoja K."/>
            <person name="Tan S.L."/>
            <person name="Tang S."/>
            <person name="Taylor M.S."/>
            <person name="Tegner J."/>
            <person name="Teichmann S.A."/>
            <person name="Ueda H.R."/>
            <person name="van Nimwegen E."/>
            <person name="Verardo R."/>
            <person name="Wei C.L."/>
            <person name="Yagi K."/>
            <person name="Yamanishi H."/>
            <person name="Zabarovsky E."/>
            <person name="Zhu S."/>
            <person name="Zimmer A."/>
            <person name="Hide W."/>
            <person name="Bult C."/>
            <person name="Grimmond S.M."/>
            <person name="Teasdale R.D."/>
            <person name="Liu E.T."/>
            <person name="Brusic V."/>
            <person name="Quackenbush J."/>
            <person name="Wahlestedt C."/>
            <person name="Mattick J.S."/>
            <person name="Hume D.A."/>
            <person name="Kai C."/>
            <person name="Sasaki D."/>
            <person name="Tomaru Y."/>
            <person name="Fukuda S."/>
            <person name="Kanamori-Katayama M."/>
            <person name="Suzuki M."/>
            <person name="Aoki J."/>
            <person name="Arakawa T."/>
            <person name="Iida J."/>
            <person name="Imamura K."/>
            <person name="Itoh M."/>
            <person name="Kato T."/>
            <person name="Kawaji H."/>
            <person name="Kawagashira N."/>
            <person name="Kawashima T."/>
            <person name="Kojima M."/>
            <person name="Kondo S."/>
            <person name="Konno H."/>
            <person name="Nakano K."/>
            <person name="Ninomiya N."/>
            <person name="Nishio T."/>
            <person name="Okada M."/>
            <person name="Plessy C."/>
            <person name="Shibata K."/>
            <person name="Shiraki T."/>
            <person name="Suzuki S."/>
            <person name="Tagami M."/>
            <person name="Waki K."/>
            <person name="Watahiki A."/>
            <person name="Okamura-Oho Y."/>
            <person name="Suzuki H."/>
            <person name="Kawai J."/>
            <person name="Hayashizaki Y."/>
        </authorList>
    </citation>
    <scope>NUCLEOTIDE SEQUENCE [LARGE SCALE MRNA]</scope>
    <source>
        <strain>C57BL/6J</strain>
        <tissue>Eye</tissue>
    </source>
</reference>
<reference key="3">
    <citation type="journal article" date="2004" name="Genome Res.">
        <title>The status, quality, and expansion of the NIH full-length cDNA project: the Mammalian Gene Collection (MGC).</title>
        <authorList>
            <consortium name="The MGC Project Team"/>
        </authorList>
    </citation>
    <scope>NUCLEOTIDE SEQUENCE [LARGE SCALE MRNA]</scope>
    <source>
        <strain>FVB/N</strain>
        <tissue>Liver</tissue>
    </source>
</reference>
<comment type="function">
    <text evidence="1">Component of the complement C1 complex, a multiprotein complex that initiates the classical pathway of the complement system, a cascade of proteins that leads to phagocytosis and breakdown of pathogens and signaling that strengthens the adaptive immune system. C1S is activated following association of the C1 complex with immunoglobulins (IgG or IgM) complexed with antigens to form antigen-antibody complexes on the surface of pathogens. C1S is cleaved and activated by C1R to generate C1s subcomponent heavy and light chains. C1s subcomponent light chain then cleaves and activates C2 and C4, the next components of the classical complement pathway.</text>
</comment>
<comment type="function">
    <molecule>Complement C1s-A subcomponent light chain</molecule>
    <text evidence="1">Serine protease component of the complement C1 complex, which catalyzes cleavage and activation of C2 and C4, the next components of the classical complement pathway. Also cleaves IGFBP5 and thereby inhibits the trophic effects of IGF1.</text>
</comment>
<comment type="catalytic activity">
    <molecule>Complement C1s-A subcomponent light chain</molecule>
    <reaction evidence="1">
        <text>Cleavage of Arg-|-Ala bond in complement component C4 to form C4a and C4b, and Lys(or Arg)-|-Lys bond in complement component C2 to form C2a and C2b: the 'classical' pathway C3 convertase.</text>
        <dbReference type="EC" id="3.4.21.42"/>
    </reaction>
</comment>
<comment type="activity regulation">
    <text evidence="1">Cleaved and activated by C1R. Immunoglobulin-binding promotes autoactivation of C1R, which results in the cleavage of the Arg-Ile bond in the catalytic domain. Inhibited by C1 inhibitor (SERPING1).</text>
</comment>
<comment type="subunit">
    <text evidence="1">Core component of the complement C1 complex, a calcium-dependent complex composed of 1 molecule of the C1Q subcomplex, 2 molecules of C1R and 2 molecules of C1S. The C1Q subcomplex is composed 18 subunits: 3 chains of C1QA, C1QB, and C1QC trimerize to form 6 collagen-like triple helices connected to six globular ligand-recognition modules.</text>
</comment>
<comment type="subcellular location">
    <subcellularLocation>
        <location evidence="1">Secreted</location>
    </subcellularLocation>
    <subcellularLocation>
        <location evidence="1">Cell surface</location>
    </subcellularLocation>
    <text evidence="1">Recruited to the surface of pathogens by the C1Q subcomplex.</text>
</comment>
<comment type="tissue specificity">
    <text evidence="6">Predominantly expressed in liver.</text>
</comment>
<comment type="PTM">
    <text evidence="1">Cleaved and activated by C1R to generate Complement C1s subcomponent heavy and light chains.</text>
</comment>
<comment type="PTM">
    <text evidence="1">The iron and 2-oxoglutarate dependent 3-hydroxylation of aspartate and asparagine is (R) stereospecific within EGF domains.</text>
</comment>
<comment type="similarity">
    <text evidence="4">Belongs to the peptidase S1 family.</text>
</comment>
<comment type="sequence caution" evidence="8">
    <conflict type="erroneous initiation">
        <sequence resource="EMBL-CDS" id="BAC39910"/>
    </conflict>
</comment>
<gene>
    <name evidence="9" type="primary">C1s1</name>
    <name evidence="7" type="synonym">C1s</name>
    <name evidence="7 9" type="synonym">C1sa</name>
</gene>
<proteinExistence type="evidence at transcript level"/>
<name>CS1A_MOUSE</name>
<protein>
    <recommendedName>
        <fullName evidence="8">Complement C1s-1 subcomponent</fullName>
        <ecNumber evidence="1">3.4.21.42</ecNumber>
    </recommendedName>
    <alternativeName>
        <fullName>C1 esterase</fullName>
    </alternativeName>
    <alternativeName>
        <fullName>Complement C1s-A subcomponent</fullName>
    </alternativeName>
    <alternativeName>
        <fullName>Complement component 1 subcomponent s-A</fullName>
    </alternativeName>
    <alternativeName>
        <fullName evidence="9">Complement component 1, S subcomponent 1</fullName>
    </alternativeName>
    <component>
        <recommendedName>
            <fullName>Complement C1s-A subcomponent heavy chain</fullName>
        </recommendedName>
    </component>
    <component>
        <recommendedName>
            <fullName>Complement C1s-A subcomponent light chain</fullName>
        </recommendedName>
    </component>
</protein>